<keyword id="KW-0963">Cytoplasm</keyword>
<keyword id="KW-0460">Magnesium</keyword>
<keyword id="KW-0479">Metal-binding</keyword>
<keyword id="KW-0566">Pantothenate biosynthesis</keyword>
<keyword id="KW-0808">Transferase</keyword>
<protein>
    <recommendedName>
        <fullName evidence="1">3-methyl-2-oxobutanoate hydroxymethyltransferase</fullName>
        <ecNumber evidence="1">2.1.2.11</ecNumber>
    </recommendedName>
    <alternativeName>
        <fullName evidence="1">Ketopantoate hydroxymethyltransferase</fullName>
        <shortName evidence="1">KPHMT</shortName>
    </alternativeName>
</protein>
<proteinExistence type="inferred from homology"/>
<reference key="1">
    <citation type="journal article" date="2001" name="Science">
        <title>Comparative genomics of Listeria species.</title>
        <authorList>
            <person name="Glaser P."/>
            <person name="Frangeul L."/>
            <person name="Buchrieser C."/>
            <person name="Rusniok C."/>
            <person name="Amend A."/>
            <person name="Baquero F."/>
            <person name="Berche P."/>
            <person name="Bloecker H."/>
            <person name="Brandt P."/>
            <person name="Chakraborty T."/>
            <person name="Charbit A."/>
            <person name="Chetouani F."/>
            <person name="Couve E."/>
            <person name="de Daruvar A."/>
            <person name="Dehoux P."/>
            <person name="Domann E."/>
            <person name="Dominguez-Bernal G."/>
            <person name="Duchaud E."/>
            <person name="Durant L."/>
            <person name="Dussurget O."/>
            <person name="Entian K.-D."/>
            <person name="Fsihi H."/>
            <person name="Garcia-del Portillo F."/>
            <person name="Garrido P."/>
            <person name="Gautier L."/>
            <person name="Goebel W."/>
            <person name="Gomez-Lopez N."/>
            <person name="Hain T."/>
            <person name="Hauf J."/>
            <person name="Jackson D."/>
            <person name="Jones L.-M."/>
            <person name="Kaerst U."/>
            <person name="Kreft J."/>
            <person name="Kuhn M."/>
            <person name="Kunst F."/>
            <person name="Kurapkat G."/>
            <person name="Madueno E."/>
            <person name="Maitournam A."/>
            <person name="Mata Vicente J."/>
            <person name="Ng E."/>
            <person name="Nedjari H."/>
            <person name="Nordsiek G."/>
            <person name="Novella S."/>
            <person name="de Pablos B."/>
            <person name="Perez-Diaz J.-C."/>
            <person name="Purcell R."/>
            <person name="Remmel B."/>
            <person name="Rose M."/>
            <person name="Schlueter T."/>
            <person name="Simoes N."/>
            <person name="Tierrez A."/>
            <person name="Vazquez-Boland J.-A."/>
            <person name="Voss H."/>
            <person name="Wehland J."/>
            <person name="Cossart P."/>
        </authorList>
    </citation>
    <scope>NUCLEOTIDE SEQUENCE [LARGE SCALE GENOMIC DNA]</scope>
    <source>
        <strain>ATCC BAA-680 / CLIP 11262</strain>
    </source>
</reference>
<dbReference type="EC" id="2.1.2.11" evidence="1"/>
<dbReference type="EMBL" id="AL596170">
    <property type="protein sequence ID" value="CAC97246.1"/>
    <property type="molecule type" value="Genomic_DNA"/>
</dbReference>
<dbReference type="PIR" id="AF1684">
    <property type="entry name" value="AF1684"/>
</dbReference>
<dbReference type="RefSeq" id="WP_003763081.1">
    <property type="nucleotide sequence ID" value="NC_003212.1"/>
</dbReference>
<dbReference type="SMR" id="Q92AA6"/>
<dbReference type="STRING" id="272626.gene:17566374"/>
<dbReference type="GeneID" id="93235354"/>
<dbReference type="KEGG" id="lin:panB"/>
<dbReference type="eggNOG" id="COG0413">
    <property type="taxonomic scope" value="Bacteria"/>
</dbReference>
<dbReference type="HOGENOM" id="CLU_036645_1_0_9"/>
<dbReference type="OrthoDB" id="9781789at2"/>
<dbReference type="UniPathway" id="UPA00028">
    <property type="reaction ID" value="UER00003"/>
</dbReference>
<dbReference type="Proteomes" id="UP000002513">
    <property type="component" value="Chromosome"/>
</dbReference>
<dbReference type="GO" id="GO:0005737">
    <property type="term" value="C:cytoplasm"/>
    <property type="evidence" value="ECO:0007669"/>
    <property type="project" value="UniProtKB-SubCell"/>
</dbReference>
<dbReference type="GO" id="GO:0003864">
    <property type="term" value="F:3-methyl-2-oxobutanoate hydroxymethyltransferase activity"/>
    <property type="evidence" value="ECO:0007669"/>
    <property type="project" value="UniProtKB-UniRule"/>
</dbReference>
<dbReference type="GO" id="GO:0000287">
    <property type="term" value="F:magnesium ion binding"/>
    <property type="evidence" value="ECO:0007669"/>
    <property type="project" value="TreeGrafter"/>
</dbReference>
<dbReference type="GO" id="GO:0015940">
    <property type="term" value="P:pantothenate biosynthetic process"/>
    <property type="evidence" value="ECO:0007669"/>
    <property type="project" value="UniProtKB-UniRule"/>
</dbReference>
<dbReference type="CDD" id="cd06557">
    <property type="entry name" value="KPHMT-like"/>
    <property type="match status" value="1"/>
</dbReference>
<dbReference type="FunFam" id="3.20.20.60:FF:000003">
    <property type="entry name" value="3-methyl-2-oxobutanoate hydroxymethyltransferase"/>
    <property type="match status" value="1"/>
</dbReference>
<dbReference type="Gene3D" id="3.20.20.60">
    <property type="entry name" value="Phosphoenolpyruvate-binding domains"/>
    <property type="match status" value="1"/>
</dbReference>
<dbReference type="HAMAP" id="MF_00156">
    <property type="entry name" value="PanB"/>
    <property type="match status" value="1"/>
</dbReference>
<dbReference type="InterPro" id="IPR003700">
    <property type="entry name" value="Pantoate_hydroxy_MeTrfase"/>
</dbReference>
<dbReference type="InterPro" id="IPR015813">
    <property type="entry name" value="Pyrv/PenolPyrv_kinase-like_dom"/>
</dbReference>
<dbReference type="InterPro" id="IPR040442">
    <property type="entry name" value="Pyrv_kinase-like_dom_sf"/>
</dbReference>
<dbReference type="NCBIfam" id="TIGR00222">
    <property type="entry name" value="panB"/>
    <property type="match status" value="1"/>
</dbReference>
<dbReference type="NCBIfam" id="NF001452">
    <property type="entry name" value="PRK00311.1"/>
    <property type="match status" value="1"/>
</dbReference>
<dbReference type="PANTHER" id="PTHR20881">
    <property type="entry name" value="3-METHYL-2-OXOBUTANOATE HYDROXYMETHYLTRANSFERASE"/>
    <property type="match status" value="1"/>
</dbReference>
<dbReference type="PANTHER" id="PTHR20881:SF0">
    <property type="entry name" value="3-METHYL-2-OXOBUTANOATE HYDROXYMETHYLTRANSFERASE"/>
    <property type="match status" value="1"/>
</dbReference>
<dbReference type="Pfam" id="PF02548">
    <property type="entry name" value="Pantoate_transf"/>
    <property type="match status" value="1"/>
</dbReference>
<dbReference type="PIRSF" id="PIRSF000388">
    <property type="entry name" value="Pantoate_hydroxy_MeTrfase"/>
    <property type="match status" value="1"/>
</dbReference>
<dbReference type="SUPFAM" id="SSF51621">
    <property type="entry name" value="Phosphoenolpyruvate/pyruvate domain"/>
    <property type="match status" value="1"/>
</dbReference>
<evidence type="ECO:0000255" key="1">
    <source>
        <dbReference type="HAMAP-Rule" id="MF_00156"/>
    </source>
</evidence>
<accession>Q92AA6</accession>
<gene>
    <name evidence="1" type="primary">panB</name>
    <name type="ordered locus">lin2016</name>
</gene>
<organism>
    <name type="scientific">Listeria innocua serovar 6a (strain ATCC BAA-680 / CLIP 11262)</name>
    <dbReference type="NCBI Taxonomy" id="272626"/>
    <lineage>
        <taxon>Bacteria</taxon>
        <taxon>Bacillati</taxon>
        <taxon>Bacillota</taxon>
        <taxon>Bacilli</taxon>
        <taxon>Bacillales</taxon>
        <taxon>Listeriaceae</taxon>
        <taxon>Listeria</taxon>
    </lineage>
</organism>
<name>PANB_LISIN</name>
<comment type="function">
    <text evidence="1">Catalyzes the reversible reaction in which hydroxymethyl group from 5,10-methylenetetrahydrofolate is transferred onto alpha-ketoisovalerate to form ketopantoate.</text>
</comment>
<comment type="catalytic activity">
    <reaction evidence="1">
        <text>3-methyl-2-oxobutanoate + (6R)-5,10-methylene-5,6,7,8-tetrahydrofolate + H2O = 2-dehydropantoate + (6S)-5,6,7,8-tetrahydrofolate</text>
        <dbReference type="Rhea" id="RHEA:11824"/>
        <dbReference type="ChEBI" id="CHEBI:11561"/>
        <dbReference type="ChEBI" id="CHEBI:11851"/>
        <dbReference type="ChEBI" id="CHEBI:15377"/>
        <dbReference type="ChEBI" id="CHEBI:15636"/>
        <dbReference type="ChEBI" id="CHEBI:57453"/>
        <dbReference type="EC" id="2.1.2.11"/>
    </reaction>
</comment>
<comment type="cofactor">
    <cofactor evidence="1">
        <name>Mg(2+)</name>
        <dbReference type="ChEBI" id="CHEBI:18420"/>
    </cofactor>
    <text evidence="1">Binds 1 Mg(2+) ion per subunit.</text>
</comment>
<comment type="pathway">
    <text evidence="1">Cofactor biosynthesis; (R)-pantothenate biosynthesis; (R)-pantoate from 3-methyl-2-oxobutanoate: step 1/2.</text>
</comment>
<comment type="subunit">
    <text evidence="1">Homodecamer; pentamer of dimers.</text>
</comment>
<comment type="subcellular location">
    <subcellularLocation>
        <location evidence="1">Cytoplasm</location>
    </subcellularLocation>
</comment>
<comment type="similarity">
    <text evidence="1">Belongs to the PanB family.</text>
</comment>
<sequence length="277" mass="29959">MKKPVDFFAMKENGEKITMITAYDYPSAKNVEQAEADMILVGDSLGMVVLGYDSTVPVTMNDMIHHTKAVKRGAPNTFVVTDMPFMTYHGSVDETIQNARKIIQESGAHAVKLEGAGEVVNKIARLTEAGAPVVAHLGLTPQSVGLTGSYKVRAKSVQEAQELIDNALAVEAAGAIAIVLEAIPRQLAEKVTKALTIPTIGIGAGLETDGQVLVYHDIIGYGINRRAKFVKAYADIDETIEPALKNYVNDVKELAFPEVKHSFTMAEEDLKGLYGRE</sequence>
<feature type="chain" id="PRO_0000184857" description="3-methyl-2-oxobutanoate hydroxymethyltransferase">
    <location>
        <begin position="1"/>
        <end position="277"/>
    </location>
</feature>
<feature type="active site" description="Proton acceptor" evidence="1">
    <location>
        <position position="181"/>
    </location>
</feature>
<feature type="binding site" evidence="1">
    <location>
        <begin position="43"/>
        <end position="44"/>
    </location>
    <ligand>
        <name>3-methyl-2-oxobutanoate</name>
        <dbReference type="ChEBI" id="CHEBI:11851"/>
    </ligand>
</feature>
<feature type="binding site" evidence="1">
    <location>
        <position position="43"/>
    </location>
    <ligand>
        <name>Mg(2+)</name>
        <dbReference type="ChEBI" id="CHEBI:18420"/>
    </ligand>
</feature>
<feature type="binding site" evidence="1">
    <location>
        <position position="82"/>
    </location>
    <ligand>
        <name>3-methyl-2-oxobutanoate</name>
        <dbReference type="ChEBI" id="CHEBI:11851"/>
    </ligand>
</feature>
<feature type="binding site" evidence="1">
    <location>
        <position position="82"/>
    </location>
    <ligand>
        <name>Mg(2+)</name>
        <dbReference type="ChEBI" id="CHEBI:18420"/>
    </ligand>
</feature>
<feature type="binding site" evidence="1">
    <location>
        <position position="112"/>
    </location>
    <ligand>
        <name>3-methyl-2-oxobutanoate</name>
        <dbReference type="ChEBI" id="CHEBI:11851"/>
    </ligand>
</feature>
<feature type="binding site" evidence="1">
    <location>
        <position position="114"/>
    </location>
    <ligand>
        <name>Mg(2+)</name>
        <dbReference type="ChEBI" id="CHEBI:18420"/>
    </ligand>
</feature>